<accession>Q9X8P6</accession>
<gene>
    <name evidence="1" type="primary">purA</name>
    <name type="ordered locus">SCO3629</name>
    <name type="ORF">SCH10.07c</name>
</gene>
<reference key="1">
    <citation type="journal article" date="2002" name="Nature">
        <title>Complete genome sequence of the model actinomycete Streptomyces coelicolor A3(2).</title>
        <authorList>
            <person name="Bentley S.D."/>
            <person name="Chater K.F."/>
            <person name="Cerdeno-Tarraga A.-M."/>
            <person name="Challis G.L."/>
            <person name="Thomson N.R."/>
            <person name="James K.D."/>
            <person name="Harris D.E."/>
            <person name="Quail M.A."/>
            <person name="Kieser H."/>
            <person name="Harper D."/>
            <person name="Bateman A."/>
            <person name="Brown S."/>
            <person name="Chandra G."/>
            <person name="Chen C.W."/>
            <person name="Collins M."/>
            <person name="Cronin A."/>
            <person name="Fraser A."/>
            <person name="Goble A."/>
            <person name="Hidalgo J."/>
            <person name="Hornsby T."/>
            <person name="Howarth S."/>
            <person name="Huang C.-H."/>
            <person name="Kieser T."/>
            <person name="Larke L."/>
            <person name="Murphy L.D."/>
            <person name="Oliver K."/>
            <person name="O'Neil S."/>
            <person name="Rabbinowitsch E."/>
            <person name="Rajandream M.A."/>
            <person name="Rutherford K.M."/>
            <person name="Rutter S."/>
            <person name="Seeger K."/>
            <person name="Saunders D."/>
            <person name="Sharp S."/>
            <person name="Squares R."/>
            <person name="Squares S."/>
            <person name="Taylor K."/>
            <person name="Warren T."/>
            <person name="Wietzorrek A."/>
            <person name="Woodward J.R."/>
            <person name="Barrell B.G."/>
            <person name="Parkhill J."/>
            <person name="Hopwood D.A."/>
        </authorList>
    </citation>
    <scope>NUCLEOTIDE SEQUENCE [LARGE SCALE GENOMIC DNA]</scope>
    <source>
        <strain>ATCC BAA-471 / A3(2) / M145</strain>
    </source>
</reference>
<name>PURA_STRCO</name>
<dbReference type="EC" id="6.3.4.4" evidence="1"/>
<dbReference type="EMBL" id="AL939117">
    <property type="protein sequence ID" value="CAB42016.1"/>
    <property type="molecule type" value="Genomic_DNA"/>
</dbReference>
<dbReference type="PIR" id="T36519">
    <property type="entry name" value="T36519"/>
</dbReference>
<dbReference type="RefSeq" id="NP_627823.1">
    <property type="nucleotide sequence ID" value="NC_003888.3"/>
</dbReference>
<dbReference type="RefSeq" id="WP_003975310.1">
    <property type="nucleotide sequence ID" value="NZ_VNID01000003.1"/>
</dbReference>
<dbReference type="SMR" id="Q9X8P6"/>
<dbReference type="FunCoup" id="Q9X8P6">
    <property type="interactions" value="517"/>
</dbReference>
<dbReference type="STRING" id="100226.gene:17761252"/>
<dbReference type="PaxDb" id="100226-SCO3629"/>
<dbReference type="KEGG" id="sco:SCO3629"/>
<dbReference type="PATRIC" id="fig|100226.15.peg.3688"/>
<dbReference type="eggNOG" id="COG0104">
    <property type="taxonomic scope" value="Bacteria"/>
</dbReference>
<dbReference type="HOGENOM" id="CLU_029848_0_0_11"/>
<dbReference type="InParanoid" id="Q9X8P6"/>
<dbReference type="OrthoDB" id="9807553at2"/>
<dbReference type="PhylomeDB" id="Q9X8P6"/>
<dbReference type="UniPathway" id="UPA00075">
    <property type="reaction ID" value="UER00335"/>
</dbReference>
<dbReference type="Proteomes" id="UP000001973">
    <property type="component" value="Chromosome"/>
</dbReference>
<dbReference type="GO" id="GO:0005737">
    <property type="term" value="C:cytoplasm"/>
    <property type="evidence" value="ECO:0000318"/>
    <property type="project" value="GO_Central"/>
</dbReference>
<dbReference type="GO" id="GO:0004019">
    <property type="term" value="F:adenylosuccinate synthase activity"/>
    <property type="evidence" value="ECO:0000318"/>
    <property type="project" value="GO_Central"/>
</dbReference>
<dbReference type="GO" id="GO:0005525">
    <property type="term" value="F:GTP binding"/>
    <property type="evidence" value="ECO:0007669"/>
    <property type="project" value="UniProtKB-UniRule"/>
</dbReference>
<dbReference type="GO" id="GO:0000287">
    <property type="term" value="F:magnesium ion binding"/>
    <property type="evidence" value="ECO:0007669"/>
    <property type="project" value="UniProtKB-UniRule"/>
</dbReference>
<dbReference type="GO" id="GO:0044208">
    <property type="term" value="P:'de novo' AMP biosynthetic process"/>
    <property type="evidence" value="ECO:0000318"/>
    <property type="project" value="GO_Central"/>
</dbReference>
<dbReference type="GO" id="GO:0046040">
    <property type="term" value="P:IMP metabolic process"/>
    <property type="evidence" value="ECO:0000318"/>
    <property type="project" value="GO_Central"/>
</dbReference>
<dbReference type="CDD" id="cd03108">
    <property type="entry name" value="AdSS"/>
    <property type="match status" value="1"/>
</dbReference>
<dbReference type="FunFam" id="1.10.300.10:FF:000001">
    <property type="entry name" value="Adenylosuccinate synthetase"/>
    <property type="match status" value="1"/>
</dbReference>
<dbReference type="FunFam" id="3.90.170.10:FF:000001">
    <property type="entry name" value="Adenylosuccinate synthetase"/>
    <property type="match status" value="1"/>
</dbReference>
<dbReference type="Gene3D" id="3.40.440.10">
    <property type="entry name" value="Adenylosuccinate Synthetase, subunit A, domain 1"/>
    <property type="match status" value="1"/>
</dbReference>
<dbReference type="Gene3D" id="1.10.300.10">
    <property type="entry name" value="Adenylosuccinate Synthetase, subunit A, domain 2"/>
    <property type="match status" value="1"/>
</dbReference>
<dbReference type="Gene3D" id="3.90.170.10">
    <property type="entry name" value="Adenylosuccinate Synthetase, subunit A, domain 3"/>
    <property type="match status" value="1"/>
</dbReference>
<dbReference type="HAMAP" id="MF_00011">
    <property type="entry name" value="Adenylosucc_synth"/>
    <property type="match status" value="1"/>
</dbReference>
<dbReference type="InterPro" id="IPR018220">
    <property type="entry name" value="Adenylosuccin_syn_GTP-bd"/>
</dbReference>
<dbReference type="InterPro" id="IPR033128">
    <property type="entry name" value="Adenylosuccin_syn_Lys_AS"/>
</dbReference>
<dbReference type="InterPro" id="IPR042109">
    <property type="entry name" value="Adenylosuccinate_synth_dom1"/>
</dbReference>
<dbReference type="InterPro" id="IPR042110">
    <property type="entry name" value="Adenylosuccinate_synth_dom2"/>
</dbReference>
<dbReference type="InterPro" id="IPR042111">
    <property type="entry name" value="Adenylosuccinate_synth_dom3"/>
</dbReference>
<dbReference type="InterPro" id="IPR001114">
    <property type="entry name" value="Adenylosuccinate_synthetase"/>
</dbReference>
<dbReference type="InterPro" id="IPR027417">
    <property type="entry name" value="P-loop_NTPase"/>
</dbReference>
<dbReference type="NCBIfam" id="NF002223">
    <property type="entry name" value="PRK01117.1"/>
    <property type="match status" value="1"/>
</dbReference>
<dbReference type="NCBIfam" id="TIGR00184">
    <property type="entry name" value="purA"/>
    <property type="match status" value="1"/>
</dbReference>
<dbReference type="PANTHER" id="PTHR11846">
    <property type="entry name" value="ADENYLOSUCCINATE SYNTHETASE"/>
    <property type="match status" value="1"/>
</dbReference>
<dbReference type="PANTHER" id="PTHR11846:SF0">
    <property type="entry name" value="ADENYLOSUCCINATE SYNTHETASE"/>
    <property type="match status" value="1"/>
</dbReference>
<dbReference type="Pfam" id="PF00709">
    <property type="entry name" value="Adenylsucc_synt"/>
    <property type="match status" value="1"/>
</dbReference>
<dbReference type="SMART" id="SM00788">
    <property type="entry name" value="Adenylsucc_synt"/>
    <property type="match status" value="1"/>
</dbReference>
<dbReference type="SUPFAM" id="SSF52540">
    <property type="entry name" value="P-loop containing nucleoside triphosphate hydrolases"/>
    <property type="match status" value="1"/>
</dbReference>
<dbReference type="PROSITE" id="PS01266">
    <property type="entry name" value="ADENYLOSUCCIN_SYN_1"/>
    <property type="match status" value="1"/>
</dbReference>
<dbReference type="PROSITE" id="PS00513">
    <property type="entry name" value="ADENYLOSUCCIN_SYN_2"/>
    <property type="match status" value="1"/>
</dbReference>
<sequence>MPALVLLGAQWGDEGKGKATDLLGGSVDYVVRYQGGNNAGHTVVVGDQKYALHLLPSGILSPGCTPVIGNGVVVDPSVLFSELSGLNERGVDTSKLLISGNAHIITPYNVTVDKVTERFLGKRKIGTTGRGIGPTYADKINRVGIRVQDLYDESILTQKVEAALDVKNQMLTKLYNRRAIATGQVVEELLGYADKLAPYVADTVLVLNQALDDDKVVLFEGGQGTLLDIDHGTYPFVTSSNPTAGGACTGAGVGPTKISRVIGILKAYTTRVGAGPFPTELFDEDGEALRRIGGERGVTTGRDRRCGWFDAVIARYATRVNGLTDFFLTKLDVLTGWEQIPVCVAYEIDGKRVEELPYSQSDFHHAKPVYETLPGWSEDITKAKSFSDLPKNAQAYVKALEEMSGAPISAIGVGPGRDETIEINSFL</sequence>
<proteinExistence type="inferred from homology"/>
<organism>
    <name type="scientific">Streptomyces coelicolor (strain ATCC BAA-471 / A3(2) / M145)</name>
    <dbReference type="NCBI Taxonomy" id="100226"/>
    <lineage>
        <taxon>Bacteria</taxon>
        <taxon>Bacillati</taxon>
        <taxon>Actinomycetota</taxon>
        <taxon>Actinomycetes</taxon>
        <taxon>Kitasatosporales</taxon>
        <taxon>Streptomycetaceae</taxon>
        <taxon>Streptomyces</taxon>
        <taxon>Streptomyces albidoflavus group</taxon>
    </lineage>
</organism>
<protein>
    <recommendedName>
        <fullName evidence="1">Adenylosuccinate synthetase</fullName>
        <shortName evidence="1">AMPSase</shortName>
        <shortName evidence="1">AdSS</shortName>
        <ecNumber evidence="1">6.3.4.4</ecNumber>
    </recommendedName>
    <alternativeName>
        <fullName evidence="1">IMP--aspartate ligase</fullName>
    </alternativeName>
</protein>
<keyword id="KW-0963">Cytoplasm</keyword>
<keyword id="KW-0342">GTP-binding</keyword>
<keyword id="KW-0436">Ligase</keyword>
<keyword id="KW-0460">Magnesium</keyword>
<keyword id="KW-0479">Metal-binding</keyword>
<keyword id="KW-0547">Nucleotide-binding</keyword>
<keyword id="KW-0658">Purine biosynthesis</keyword>
<keyword id="KW-1185">Reference proteome</keyword>
<comment type="function">
    <text evidence="1">Plays an important role in the de novo pathway of purine nucleotide biosynthesis. Catalyzes the first committed step in the biosynthesis of AMP from IMP.</text>
</comment>
<comment type="catalytic activity">
    <reaction evidence="1">
        <text>IMP + L-aspartate + GTP = N(6)-(1,2-dicarboxyethyl)-AMP + GDP + phosphate + 2 H(+)</text>
        <dbReference type="Rhea" id="RHEA:15753"/>
        <dbReference type="ChEBI" id="CHEBI:15378"/>
        <dbReference type="ChEBI" id="CHEBI:29991"/>
        <dbReference type="ChEBI" id="CHEBI:37565"/>
        <dbReference type="ChEBI" id="CHEBI:43474"/>
        <dbReference type="ChEBI" id="CHEBI:57567"/>
        <dbReference type="ChEBI" id="CHEBI:58053"/>
        <dbReference type="ChEBI" id="CHEBI:58189"/>
        <dbReference type="EC" id="6.3.4.4"/>
    </reaction>
</comment>
<comment type="cofactor">
    <cofactor evidence="1">
        <name>Mg(2+)</name>
        <dbReference type="ChEBI" id="CHEBI:18420"/>
    </cofactor>
    <text evidence="1">Binds 1 Mg(2+) ion per subunit.</text>
</comment>
<comment type="pathway">
    <text evidence="1">Purine metabolism; AMP biosynthesis via de novo pathway; AMP from IMP: step 1/2.</text>
</comment>
<comment type="subunit">
    <text evidence="1">Homodimer.</text>
</comment>
<comment type="subcellular location">
    <subcellularLocation>
        <location evidence="1">Cytoplasm</location>
    </subcellularLocation>
</comment>
<comment type="similarity">
    <text evidence="1">Belongs to the adenylosuccinate synthetase family.</text>
</comment>
<feature type="chain" id="PRO_0000095237" description="Adenylosuccinate synthetase">
    <location>
        <begin position="1"/>
        <end position="427"/>
    </location>
</feature>
<feature type="active site" description="Proton acceptor" evidence="1">
    <location>
        <position position="13"/>
    </location>
</feature>
<feature type="active site" description="Proton donor" evidence="1">
    <location>
        <position position="41"/>
    </location>
</feature>
<feature type="binding site" evidence="1">
    <location>
        <begin position="12"/>
        <end position="18"/>
    </location>
    <ligand>
        <name>GTP</name>
        <dbReference type="ChEBI" id="CHEBI:37565"/>
    </ligand>
</feature>
<feature type="binding site" description="in other chain" evidence="1">
    <location>
        <begin position="13"/>
        <end position="16"/>
    </location>
    <ligand>
        <name>IMP</name>
        <dbReference type="ChEBI" id="CHEBI:58053"/>
        <note>ligand shared between dimeric partners</note>
    </ligand>
</feature>
<feature type="binding site" evidence="1">
    <location>
        <position position="13"/>
    </location>
    <ligand>
        <name>Mg(2+)</name>
        <dbReference type="ChEBI" id="CHEBI:18420"/>
    </ligand>
</feature>
<feature type="binding site" description="in other chain" evidence="1">
    <location>
        <begin position="38"/>
        <end position="41"/>
    </location>
    <ligand>
        <name>IMP</name>
        <dbReference type="ChEBI" id="CHEBI:58053"/>
        <note>ligand shared between dimeric partners</note>
    </ligand>
</feature>
<feature type="binding site" evidence="1">
    <location>
        <begin position="40"/>
        <end position="42"/>
    </location>
    <ligand>
        <name>GTP</name>
        <dbReference type="ChEBI" id="CHEBI:37565"/>
    </ligand>
</feature>
<feature type="binding site" evidence="1">
    <location>
        <position position="40"/>
    </location>
    <ligand>
        <name>Mg(2+)</name>
        <dbReference type="ChEBI" id="CHEBI:18420"/>
    </ligand>
</feature>
<feature type="binding site" description="in other chain" evidence="1">
    <location>
        <position position="128"/>
    </location>
    <ligand>
        <name>IMP</name>
        <dbReference type="ChEBI" id="CHEBI:58053"/>
        <note>ligand shared between dimeric partners</note>
    </ligand>
</feature>
<feature type="binding site" evidence="1">
    <location>
        <position position="142"/>
    </location>
    <ligand>
        <name>IMP</name>
        <dbReference type="ChEBI" id="CHEBI:58053"/>
        <note>ligand shared between dimeric partners</note>
    </ligand>
</feature>
<feature type="binding site" description="in other chain" evidence="1">
    <location>
        <position position="223"/>
    </location>
    <ligand>
        <name>IMP</name>
        <dbReference type="ChEBI" id="CHEBI:58053"/>
        <note>ligand shared between dimeric partners</note>
    </ligand>
</feature>
<feature type="binding site" description="in other chain" evidence="1">
    <location>
        <position position="238"/>
    </location>
    <ligand>
        <name>IMP</name>
        <dbReference type="ChEBI" id="CHEBI:58053"/>
        <note>ligand shared between dimeric partners</note>
    </ligand>
</feature>
<feature type="binding site" evidence="1">
    <location>
        <begin position="298"/>
        <end position="304"/>
    </location>
    <ligand>
        <name>substrate</name>
    </ligand>
</feature>
<feature type="binding site" description="in other chain" evidence="1">
    <location>
        <position position="302"/>
    </location>
    <ligand>
        <name>IMP</name>
        <dbReference type="ChEBI" id="CHEBI:58053"/>
        <note>ligand shared between dimeric partners</note>
    </ligand>
</feature>
<feature type="binding site" evidence="1">
    <location>
        <position position="304"/>
    </location>
    <ligand>
        <name>GTP</name>
        <dbReference type="ChEBI" id="CHEBI:37565"/>
    </ligand>
</feature>
<feature type="binding site" evidence="1">
    <location>
        <begin position="330"/>
        <end position="332"/>
    </location>
    <ligand>
        <name>GTP</name>
        <dbReference type="ChEBI" id="CHEBI:37565"/>
    </ligand>
</feature>
<feature type="binding site" evidence="1">
    <location>
        <begin position="412"/>
        <end position="414"/>
    </location>
    <ligand>
        <name>GTP</name>
        <dbReference type="ChEBI" id="CHEBI:37565"/>
    </ligand>
</feature>
<evidence type="ECO:0000255" key="1">
    <source>
        <dbReference type="HAMAP-Rule" id="MF_00011"/>
    </source>
</evidence>